<gene>
    <name evidence="1" type="primary">aroE</name>
    <name type="ordered locus">LHK_01873</name>
</gene>
<proteinExistence type="inferred from homology"/>
<keyword id="KW-0028">Amino-acid biosynthesis</keyword>
<keyword id="KW-0057">Aromatic amino acid biosynthesis</keyword>
<keyword id="KW-0521">NADP</keyword>
<keyword id="KW-0560">Oxidoreductase</keyword>
<keyword id="KW-1185">Reference proteome</keyword>
<reference key="1">
    <citation type="journal article" date="2009" name="PLoS Genet.">
        <title>The complete genome and proteome of Laribacter hongkongensis reveal potential mechanisms for adaptations to different temperatures and habitats.</title>
        <authorList>
            <person name="Woo P.C.Y."/>
            <person name="Lau S.K.P."/>
            <person name="Tse H."/>
            <person name="Teng J.L.L."/>
            <person name="Curreem S.O."/>
            <person name="Tsang A.K.L."/>
            <person name="Fan R.Y.Y."/>
            <person name="Wong G.K.M."/>
            <person name="Huang Y."/>
            <person name="Loman N.J."/>
            <person name="Snyder L.A.S."/>
            <person name="Cai J.J."/>
            <person name="Huang J.-D."/>
            <person name="Mak W."/>
            <person name="Pallen M.J."/>
            <person name="Lok S."/>
            <person name="Yuen K.-Y."/>
        </authorList>
    </citation>
    <scope>NUCLEOTIDE SEQUENCE [LARGE SCALE GENOMIC DNA]</scope>
    <source>
        <strain>HLHK9</strain>
    </source>
</reference>
<protein>
    <recommendedName>
        <fullName evidence="1">Shikimate dehydrogenase (NADP(+))</fullName>
        <shortName evidence="1">SDH</shortName>
        <ecNumber evidence="1">1.1.1.25</ecNumber>
    </recommendedName>
</protein>
<sequence length="273" mass="29248">MTELYAVIGHPIDHSQSPFIHQEFARQTGLGLDYERLLSPLDGFEATVRQFIGRGGKGLNVTLPFKLEACQLSGALTERARAADAVNTLTFRDGQIQGDNTDGVGLVRDIVDNLDVRIQGKRLLLLGAGGAVRGVLQPLLAQHPASLTVANRTVTKAEALVTHFAQWGEVDAAGYDDLAGQQFDIVINGTSTGLSGNDLPLPAGLLAGSELVYDMVYGKGLTPFLARGQAERAGMLSDGLGMLVEQAAESWHIWHGGRPNTRPVMNSLRERLA</sequence>
<feature type="chain" id="PRO_1000124889" description="Shikimate dehydrogenase (NADP(+))">
    <location>
        <begin position="1"/>
        <end position="273"/>
    </location>
</feature>
<feature type="active site" description="Proton acceptor" evidence="1">
    <location>
        <position position="66"/>
    </location>
</feature>
<feature type="binding site" evidence="1">
    <location>
        <begin position="15"/>
        <end position="17"/>
    </location>
    <ligand>
        <name>shikimate</name>
        <dbReference type="ChEBI" id="CHEBI:36208"/>
    </ligand>
</feature>
<feature type="binding site" evidence="1">
    <location>
        <position position="62"/>
    </location>
    <ligand>
        <name>shikimate</name>
        <dbReference type="ChEBI" id="CHEBI:36208"/>
    </ligand>
</feature>
<feature type="binding site" evidence="1">
    <location>
        <position position="78"/>
    </location>
    <ligand>
        <name>NADP(+)</name>
        <dbReference type="ChEBI" id="CHEBI:58349"/>
    </ligand>
</feature>
<feature type="binding site" evidence="1">
    <location>
        <position position="87"/>
    </location>
    <ligand>
        <name>shikimate</name>
        <dbReference type="ChEBI" id="CHEBI:36208"/>
    </ligand>
</feature>
<feature type="binding site" evidence="1">
    <location>
        <position position="102"/>
    </location>
    <ligand>
        <name>shikimate</name>
        <dbReference type="ChEBI" id="CHEBI:36208"/>
    </ligand>
</feature>
<feature type="binding site" evidence="1">
    <location>
        <begin position="127"/>
        <end position="131"/>
    </location>
    <ligand>
        <name>NADP(+)</name>
        <dbReference type="ChEBI" id="CHEBI:58349"/>
    </ligand>
</feature>
<feature type="binding site" evidence="1">
    <location>
        <begin position="151"/>
        <end position="156"/>
    </location>
    <ligand>
        <name>NADP(+)</name>
        <dbReference type="ChEBI" id="CHEBI:58349"/>
    </ligand>
</feature>
<feature type="binding site" evidence="1">
    <location>
        <position position="215"/>
    </location>
    <ligand>
        <name>NADP(+)</name>
        <dbReference type="ChEBI" id="CHEBI:58349"/>
    </ligand>
</feature>
<feature type="binding site" evidence="1">
    <location>
        <position position="217"/>
    </location>
    <ligand>
        <name>shikimate</name>
        <dbReference type="ChEBI" id="CHEBI:36208"/>
    </ligand>
</feature>
<feature type="binding site" evidence="1">
    <location>
        <position position="239"/>
    </location>
    <ligand>
        <name>NADP(+)</name>
        <dbReference type="ChEBI" id="CHEBI:58349"/>
    </ligand>
</feature>
<accession>C1D8R7</accession>
<dbReference type="EC" id="1.1.1.25" evidence="1"/>
<dbReference type="EMBL" id="CP001154">
    <property type="protein sequence ID" value="ACO74857.1"/>
    <property type="molecule type" value="Genomic_DNA"/>
</dbReference>
<dbReference type="RefSeq" id="WP_012697343.1">
    <property type="nucleotide sequence ID" value="NC_012559.1"/>
</dbReference>
<dbReference type="SMR" id="C1D8R7"/>
<dbReference type="STRING" id="557598.LHK_01873"/>
<dbReference type="GeneID" id="75108740"/>
<dbReference type="KEGG" id="lhk:LHK_01873"/>
<dbReference type="eggNOG" id="COG0169">
    <property type="taxonomic scope" value="Bacteria"/>
</dbReference>
<dbReference type="HOGENOM" id="CLU_044063_2_1_4"/>
<dbReference type="UniPathway" id="UPA00053">
    <property type="reaction ID" value="UER00087"/>
</dbReference>
<dbReference type="Proteomes" id="UP000002010">
    <property type="component" value="Chromosome"/>
</dbReference>
<dbReference type="GO" id="GO:0005829">
    <property type="term" value="C:cytosol"/>
    <property type="evidence" value="ECO:0007669"/>
    <property type="project" value="TreeGrafter"/>
</dbReference>
<dbReference type="GO" id="GO:0050661">
    <property type="term" value="F:NADP binding"/>
    <property type="evidence" value="ECO:0007669"/>
    <property type="project" value="InterPro"/>
</dbReference>
<dbReference type="GO" id="GO:0004764">
    <property type="term" value="F:shikimate 3-dehydrogenase (NADP+) activity"/>
    <property type="evidence" value="ECO:0007669"/>
    <property type="project" value="UniProtKB-UniRule"/>
</dbReference>
<dbReference type="GO" id="GO:0008652">
    <property type="term" value="P:amino acid biosynthetic process"/>
    <property type="evidence" value="ECO:0007669"/>
    <property type="project" value="UniProtKB-KW"/>
</dbReference>
<dbReference type="GO" id="GO:0009073">
    <property type="term" value="P:aromatic amino acid family biosynthetic process"/>
    <property type="evidence" value="ECO:0007669"/>
    <property type="project" value="UniProtKB-KW"/>
</dbReference>
<dbReference type="GO" id="GO:0009423">
    <property type="term" value="P:chorismate biosynthetic process"/>
    <property type="evidence" value="ECO:0007669"/>
    <property type="project" value="UniProtKB-UniRule"/>
</dbReference>
<dbReference type="GO" id="GO:0019632">
    <property type="term" value="P:shikimate metabolic process"/>
    <property type="evidence" value="ECO:0007669"/>
    <property type="project" value="InterPro"/>
</dbReference>
<dbReference type="CDD" id="cd01065">
    <property type="entry name" value="NAD_bind_Shikimate_DH"/>
    <property type="match status" value="1"/>
</dbReference>
<dbReference type="FunFam" id="3.40.50.10860:FF:000006">
    <property type="entry name" value="Shikimate dehydrogenase (NADP(+))"/>
    <property type="match status" value="1"/>
</dbReference>
<dbReference type="Gene3D" id="3.40.50.10860">
    <property type="entry name" value="Leucine Dehydrogenase, chain A, domain 1"/>
    <property type="match status" value="1"/>
</dbReference>
<dbReference type="Gene3D" id="3.40.50.720">
    <property type="entry name" value="NAD(P)-binding Rossmann-like Domain"/>
    <property type="match status" value="1"/>
</dbReference>
<dbReference type="HAMAP" id="MF_00222">
    <property type="entry name" value="Shikimate_DH_AroE"/>
    <property type="match status" value="1"/>
</dbReference>
<dbReference type="InterPro" id="IPR046346">
    <property type="entry name" value="Aminoacid_DH-like_N_sf"/>
</dbReference>
<dbReference type="InterPro" id="IPR036291">
    <property type="entry name" value="NAD(P)-bd_dom_sf"/>
</dbReference>
<dbReference type="InterPro" id="IPR041121">
    <property type="entry name" value="SDH_C"/>
</dbReference>
<dbReference type="InterPro" id="IPR011342">
    <property type="entry name" value="Shikimate_DH"/>
</dbReference>
<dbReference type="InterPro" id="IPR013708">
    <property type="entry name" value="Shikimate_DH-bd_N"/>
</dbReference>
<dbReference type="InterPro" id="IPR022893">
    <property type="entry name" value="Shikimate_DH_fam"/>
</dbReference>
<dbReference type="InterPro" id="IPR006151">
    <property type="entry name" value="Shikm_DH/Glu-tRNA_Rdtase"/>
</dbReference>
<dbReference type="NCBIfam" id="TIGR00507">
    <property type="entry name" value="aroE"/>
    <property type="match status" value="1"/>
</dbReference>
<dbReference type="NCBIfam" id="NF001310">
    <property type="entry name" value="PRK00258.1-2"/>
    <property type="match status" value="1"/>
</dbReference>
<dbReference type="PANTHER" id="PTHR21089:SF1">
    <property type="entry name" value="BIFUNCTIONAL 3-DEHYDROQUINATE DEHYDRATASE_SHIKIMATE DEHYDROGENASE, CHLOROPLASTIC"/>
    <property type="match status" value="1"/>
</dbReference>
<dbReference type="PANTHER" id="PTHR21089">
    <property type="entry name" value="SHIKIMATE DEHYDROGENASE"/>
    <property type="match status" value="1"/>
</dbReference>
<dbReference type="Pfam" id="PF18317">
    <property type="entry name" value="SDH_C"/>
    <property type="match status" value="1"/>
</dbReference>
<dbReference type="Pfam" id="PF01488">
    <property type="entry name" value="Shikimate_DH"/>
    <property type="match status" value="1"/>
</dbReference>
<dbReference type="Pfam" id="PF08501">
    <property type="entry name" value="Shikimate_dh_N"/>
    <property type="match status" value="1"/>
</dbReference>
<dbReference type="SUPFAM" id="SSF53223">
    <property type="entry name" value="Aminoacid dehydrogenase-like, N-terminal domain"/>
    <property type="match status" value="1"/>
</dbReference>
<dbReference type="SUPFAM" id="SSF51735">
    <property type="entry name" value="NAD(P)-binding Rossmann-fold domains"/>
    <property type="match status" value="1"/>
</dbReference>
<organism>
    <name type="scientific">Laribacter hongkongensis (strain HLHK9)</name>
    <dbReference type="NCBI Taxonomy" id="557598"/>
    <lineage>
        <taxon>Bacteria</taxon>
        <taxon>Pseudomonadati</taxon>
        <taxon>Pseudomonadota</taxon>
        <taxon>Betaproteobacteria</taxon>
        <taxon>Neisseriales</taxon>
        <taxon>Aquaspirillaceae</taxon>
        <taxon>Laribacter</taxon>
    </lineage>
</organism>
<evidence type="ECO:0000255" key="1">
    <source>
        <dbReference type="HAMAP-Rule" id="MF_00222"/>
    </source>
</evidence>
<name>AROE_LARHH</name>
<comment type="function">
    <text evidence="1">Involved in the biosynthesis of the chorismate, which leads to the biosynthesis of aromatic amino acids. Catalyzes the reversible NADPH linked reduction of 3-dehydroshikimate (DHSA) to yield shikimate (SA).</text>
</comment>
<comment type="catalytic activity">
    <reaction evidence="1">
        <text>shikimate + NADP(+) = 3-dehydroshikimate + NADPH + H(+)</text>
        <dbReference type="Rhea" id="RHEA:17737"/>
        <dbReference type="ChEBI" id="CHEBI:15378"/>
        <dbReference type="ChEBI" id="CHEBI:16630"/>
        <dbReference type="ChEBI" id="CHEBI:36208"/>
        <dbReference type="ChEBI" id="CHEBI:57783"/>
        <dbReference type="ChEBI" id="CHEBI:58349"/>
        <dbReference type="EC" id="1.1.1.25"/>
    </reaction>
</comment>
<comment type="pathway">
    <text evidence="1">Metabolic intermediate biosynthesis; chorismate biosynthesis; chorismate from D-erythrose 4-phosphate and phosphoenolpyruvate: step 4/7.</text>
</comment>
<comment type="subunit">
    <text evidence="1">Homodimer.</text>
</comment>
<comment type="similarity">
    <text evidence="1">Belongs to the shikimate dehydrogenase family.</text>
</comment>